<proteinExistence type="evidence at transcript level"/>
<comment type="function">
    <text>Involved in the presentation of foreign antigens to the immune system.</text>
</comment>
<comment type="subunit">
    <text>Heterodimer of an alpha chain and a beta chain (beta-2-microglobulin).</text>
</comment>
<comment type="subcellular location">
    <subcellularLocation>
        <location>Membrane</location>
        <topology>Single-pass type I membrane protein</topology>
    </subcellularLocation>
</comment>
<comment type="similarity">
    <text evidence="6">Belongs to the MHC class I family.</text>
</comment>
<evidence type="ECO:0000250" key="1"/>
<evidence type="ECO:0000250" key="2">
    <source>
        <dbReference type="UniProtKB" id="P01900"/>
    </source>
</evidence>
<evidence type="ECO:0000255" key="3"/>
<evidence type="ECO:0000255" key="4">
    <source>
        <dbReference type="PROSITE-ProRule" id="PRU00114"/>
    </source>
</evidence>
<evidence type="ECO:0000256" key="5">
    <source>
        <dbReference type="SAM" id="MobiDB-lite"/>
    </source>
</evidence>
<evidence type="ECO:0000305" key="6"/>
<keyword id="KW-1015">Disulfide bond</keyword>
<keyword id="KW-0325">Glycoprotein</keyword>
<keyword id="KW-0391">Immunity</keyword>
<keyword id="KW-0472">Membrane</keyword>
<keyword id="KW-0490">MHC I</keyword>
<keyword id="KW-0597">Phosphoprotein</keyword>
<keyword id="KW-0732">Signal</keyword>
<keyword id="KW-0812">Transmembrane</keyword>
<keyword id="KW-1133">Transmembrane helix</keyword>
<gene>
    <name type="primary">Popy-E</name>
</gene>
<reference key="1">
    <citation type="journal article" date="1990" name="Immunol. Rev.">
        <title>Comparison of class I MHC alleles in humans and apes.</title>
        <authorList>
            <person name="Lawlor D.A."/>
            <person name="Warren E."/>
            <person name="Ward F.E."/>
            <person name="Parham P."/>
        </authorList>
    </citation>
    <scope>NUCLEOTIDE SEQUENCE [MRNA]</scope>
</reference>
<dbReference type="EMBL" id="M30681">
    <property type="protein sequence ID" value="AAA88836.1"/>
    <property type="molecule type" value="mRNA"/>
</dbReference>
<dbReference type="PIR" id="I61867">
    <property type="entry name" value="I61867"/>
</dbReference>
<dbReference type="SMR" id="P16212"/>
<dbReference type="GlyCosmos" id="P16212">
    <property type="glycosylation" value="1 site, No reported glycans"/>
</dbReference>
<dbReference type="GO" id="GO:0031901">
    <property type="term" value="C:early endosome membrane"/>
    <property type="evidence" value="ECO:0007669"/>
    <property type="project" value="UniProtKB-ARBA"/>
</dbReference>
<dbReference type="GO" id="GO:0012507">
    <property type="term" value="C:ER to Golgi transport vesicle membrane"/>
    <property type="evidence" value="ECO:0007669"/>
    <property type="project" value="UniProtKB-ARBA"/>
</dbReference>
<dbReference type="GO" id="GO:0009897">
    <property type="term" value="C:external side of plasma membrane"/>
    <property type="evidence" value="ECO:0007669"/>
    <property type="project" value="TreeGrafter"/>
</dbReference>
<dbReference type="GO" id="GO:0005615">
    <property type="term" value="C:extracellular space"/>
    <property type="evidence" value="ECO:0007669"/>
    <property type="project" value="TreeGrafter"/>
</dbReference>
<dbReference type="GO" id="GO:0098553">
    <property type="term" value="C:lumenal side of endoplasmic reticulum membrane"/>
    <property type="evidence" value="ECO:0007669"/>
    <property type="project" value="UniProtKB-ARBA"/>
</dbReference>
<dbReference type="GO" id="GO:0042612">
    <property type="term" value="C:MHC class I protein complex"/>
    <property type="evidence" value="ECO:0007669"/>
    <property type="project" value="UniProtKB-KW"/>
</dbReference>
<dbReference type="GO" id="GO:0030670">
    <property type="term" value="C:phagocytic vesicle membrane"/>
    <property type="evidence" value="ECO:0007669"/>
    <property type="project" value="UniProtKB-ARBA"/>
</dbReference>
<dbReference type="GO" id="GO:0055038">
    <property type="term" value="C:recycling endosome membrane"/>
    <property type="evidence" value="ECO:0007669"/>
    <property type="project" value="UniProtKB-ARBA"/>
</dbReference>
<dbReference type="GO" id="GO:0042605">
    <property type="term" value="F:peptide antigen binding"/>
    <property type="evidence" value="ECO:0007669"/>
    <property type="project" value="TreeGrafter"/>
</dbReference>
<dbReference type="GO" id="GO:0005102">
    <property type="term" value="F:signaling receptor binding"/>
    <property type="evidence" value="ECO:0007669"/>
    <property type="project" value="TreeGrafter"/>
</dbReference>
<dbReference type="GO" id="GO:0002486">
    <property type="term" value="P:antigen processing and presentation of endogenous peptide antigen via MHC class I via ER pathway, TAP-independent"/>
    <property type="evidence" value="ECO:0007669"/>
    <property type="project" value="TreeGrafter"/>
</dbReference>
<dbReference type="GO" id="GO:0002476">
    <property type="term" value="P:antigen processing and presentation of endogenous peptide antigen via MHC class Ib"/>
    <property type="evidence" value="ECO:0007669"/>
    <property type="project" value="TreeGrafter"/>
</dbReference>
<dbReference type="GO" id="GO:0006955">
    <property type="term" value="P:immune response"/>
    <property type="evidence" value="ECO:0007669"/>
    <property type="project" value="InterPro"/>
</dbReference>
<dbReference type="GO" id="GO:0001916">
    <property type="term" value="P:positive regulation of T cell mediated cytotoxicity"/>
    <property type="evidence" value="ECO:0007669"/>
    <property type="project" value="TreeGrafter"/>
</dbReference>
<dbReference type="CDD" id="cd07698">
    <property type="entry name" value="IgC1_MHC_I_alpha3"/>
    <property type="match status" value="1"/>
</dbReference>
<dbReference type="FunFam" id="2.60.40.10:FF:000014">
    <property type="entry name" value="H-2 class I histocompatibility antigen, alpha chain"/>
    <property type="match status" value="1"/>
</dbReference>
<dbReference type="FunFam" id="3.30.500.10:FF:000001">
    <property type="entry name" value="H-2 class I histocompatibility antigen, alpha chain"/>
    <property type="match status" value="1"/>
</dbReference>
<dbReference type="Gene3D" id="2.60.40.10">
    <property type="entry name" value="Immunoglobulins"/>
    <property type="match status" value="1"/>
</dbReference>
<dbReference type="Gene3D" id="3.30.500.10">
    <property type="entry name" value="MHC class I-like antigen recognition-like"/>
    <property type="match status" value="1"/>
</dbReference>
<dbReference type="InterPro" id="IPR007110">
    <property type="entry name" value="Ig-like_dom"/>
</dbReference>
<dbReference type="InterPro" id="IPR036179">
    <property type="entry name" value="Ig-like_dom_sf"/>
</dbReference>
<dbReference type="InterPro" id="IPR013783">
    <property type="entry name" value="Ig-like_fold"/>
</dbReference>
<dbReference type="InterPro" id="IPR003006">
    <property type="entry name" value="Ig/MHC_CS"/>
</dbReference>
<dbReference type="InterPro" id="IPR003597">
    <property type="entry name" value="Ig_C1-set"/>
</dbReference>
<dbReference type="InterPro" id="IPR050208">
    <property type="entry name" value="MHC_class-I_related"/>
</dbReference>
<dbReference type="InterPro" id="IPR011161">
    <property type="entry name" value="MHC_I-like_Ag-recog"/>
</dbReference>
<dbReference type="InterPro" id="IPR037055">
    <property type="entry name" value="MHC_I-like_Ag-recog_sf"/>
</dbReference>
<dbReference type="InterPro" id="IPR011162">
    <property type="entry name" value="MHC_I/II-like_Ag-recog"/>
</dbReference>
<dbReference type="InterPro" id="IPR001039">
    <property type="entry name" value="MHC_I_a_a1/a2"/>
</dbReference>
<dbReference type="InterPro" id="IPR010579">
    <property type="entry name" value="MHC_I_a_C"/>
</dbReference>
<dbReference type="PANTHER" id="PTHR16675:SF164">
    <property type="entry name" value="HLA CLASS I HISTOCOMPATIBILITY ANTIGEN, ALPHA CHAIN E"/>
    <property type="match status" value="1"/>
</dbReference>
<dbReference type="PANTHER" id="PTHR16675">
    <property type="entry name" value="MHC CLASS I-RELATED"/>
    <property type="match status" value="1"/>
</dbReference>
<dbReference type="Pfam" id="PF07654">
    <property type="entry name" value="C1-set"/>
    <property type="match status" value="1"/>
</dbReference>
<dbReference type="Pfam" id="PF00129">
    <property type="entry name" value="MHC_I"/>
    <property type="match status" value="1"/>
</dbReference>
<dbReference type="Pfam" id="PF06623">
    <property type="entry name" value="MHC_I_C"/>
    <property type="match status" value="1"/>
</dbReference>
<dbReference type="PRINTS" id="PR01638">
    <property type="entry name" value="MHCCLASSI"/>
</dbReference>
<dbReference type="SMART" id="SM00407">
    <property type="entry name" value="IGc1"/>
    <property type="match status" value="1"/>
</dbReference>
<dbReference type="SUPFAM" id="SSF48726">
    <property type="entry name" value="Immunoglobulin"/>
    <property type="match status" value="1"/>
</dbReference>
<dbReference type="SUPFAM" id="SSF54452">
    <property type="entry name" value="MHC antigen-recognition domain"/>
    <property type="match status" value="1"/>
</dbReference>
<dbReference type="PROSITE" id="PS50835">
    <property type="entry name" value="IG_LIKE"/>
    <property type="match status" value="1"/>
</dbReference>
<dbReference type="PROSITE" id="PS00290">
    <property type="entry name" value="IG_MHC"/>
    <property type="match status" value="1"/>
</dbReference>
<organism>
    <name type="scientific">Pongo pygmaeus</name>
    <name type="common">Bornean orangutan</name>
    <dbReference type="NCBI Taxonomy" id="9600"/>
    <lineage>
        <taxon>Eukaryota</taxon>
        <taxon>Metazoa</taxon>
        <taxon>Chordata</taxon>
        <taxon>Craniata</taxon>
        <taxon>Vertebrata</taxon>
        <taxon>Euteleostomi</taxon>
        <taxon>Mammalia</taxon>
        <taxon>Eutheria</taxon>
        <taxon>Euarchontoglires</taxon>
        <taxon>Primates</taxon>
        <taxon>Haplorrhini</taxon>
        <taxon>Catarrhini</taxon>
        <taxon>Hominidae</taxon>
        <taxon>Pongo</taxon>
    </lineage>
</organism>
<feature type="signal peptide">
    <location>
        <begin position="1" status="less than"/>
        <end position="18"/>
    </location>
</feature>
<feature type="chain" id="PRO_0000018919" description="Popy class I histocompatibility antigen, alpha chain E">
    <location>
        <begin position="19"/>
        <end position="359"/>
    </location>
</feature>
<feature type="topological domain" description="Extracellular" evidence="3">
    <location>
        <begin position="19"/>
        <end position="302"/>
    </location>
</feature>
<feature type="transmembrane region" description="Helical" evidence="3">
    <location>
        <begin position="303"/>
        <end position="326"/>
    </location>
</feature>
<feature type="topological domain" description="Cytoplasmic" evidence="3">
    <location>
        <begin position="327"/>
        <end position="359"/>
    </location>
</feature>
<feature type="domain" description="Ig-like C1-type">
    <location>
        <begin position="203"/>
        <end position="291"/>
    </location>
</feature>
<feature type="region of interest" description="Alpha-1">
    <location>
        <begin position="19"/>
        <end position="108"/>
    </location>
</feature>
<feature type="region of interest" description="Alpha-2">
    <location>
        <begin position="109"/>
        <end position="200"/>
    </location>
</feature>
<feature type="region of interest" description="Alpha-3">
    <location>
        <begin position="201"/>
        <end position="292"/>
    </location>
</feature>
<feature type="region of interest" description="Connecting peptide">
    <location>
        <begin position="293"/>
        <end position="302"/>
    </location>
</feature>
<feature type="region of interest" description="Disordered" evidence="5">
    <location>
        <begin position="330"/>
        <end position="359"/>
    </location>
</feature>
<feature type="compositionally biased region" description="Polar residues" evidence="5">
    <location>
        <begin position="346"/>
        <end position="359"/>
    </location>
</feature>
<feature type="modified residue" description="Phosphoserine" evidence="2">
    <location>
        <position position="351"/>
    </location>
</feature>
<feature type="glycosylation site" description="N-linked (GlcNAc...) asparagine" evidence="1">
    <location>
        <position position="104"/>
    </location>
</feature>
<feature type="disulfide bond" evidence="4">
    <location>
        <begin position="119"/>
        <end position="182"/>
    </location>
</feature>
<feature type="disulfide bond" evidence="4">
    <location>
        <begin position="221"/>
        <end position="277"/>
    </location>
</feature>
<feature type="non-terminal residue">
    <location>
        <position position="1"/>
    </location>
</feature>
<accession>P16212</accession>
<name>HLAE_PONPY</name>
<sequence length="359" mass="40409">GTLLLLLSEALALTETWAGSHSLKYFHTSVSRPGRGEPRFISVGYVDDTQFVRFDNDAASPRMVPRAQWMEQEGPEYWDRETRSARDTAQTFRVNLRTLRGYYNQTEAGSHTLQWMHGCDLGPDGRFLRGYEQFAYDGKDYLTLNEDLRSWTAVDTAAQISERKSNDACEAEHQRAYLEDTCVEWLRKYLEKGKETLLHLDPPKTHVTHHRISDHEATLRCWALGFYPAEITLTWQRDGEDQNQYTELVETRPAGDGTFQKWAAVVVPSGEEQRYTCHVQHEGLPEPLTLRWEPASQTTIPIVGIFAGLVLLGAVVTGATVVAAVMWRKKSSGGKGGSYSKAEWSDSAQGSESLTACKA</sequence>
<protein>
    <recommendedName>
        <fullName>Popy class I histocompatibility antigen, alpha chain E</fullName>
    </recommendedName>
    <alternativeName>
        <fullName>MHC class I antigen E</fullName>
    </alternativeName>
</protein>